<comment type="function">
    <text evidence="1">Accessory component of a P4-ATPase flippase complex which catalyzes the hydrolysis of ATP coupled to the transport of aminophospholipids from the lumenal to the cytosolic leaflet of membranes and ensures the maintenance of asymmetric distribution of phospholipids.</text>
</comment>
<comment type="subcellular location">
    <subcellularLocation>
        <location evidence="3">Endoplasmic reticulum membrane</location>
        <topology evidence="2">Multi-pass membrane protein</topology>
    </subcellularLocation>
</comment>
<comment type="disruption phenotype">
    <text evidence="4">Abolishes invasive growth during nitrogen starvation.</text>
</comment>
<comment type="similarity">
    <text evidence="2">Belongs to the CDC50/LEM3 family.</text>
</comment>
<comment type="sequence caution" evidence="5">
    <conflict type="erroneous gene model prediction">
        <sequence resource="EMBL-CDS" id="BAA21381"/>
    </conflict>
</comment>
<keyword id="KW-1015">Disulfide bond</keyword>
<keyword id="KW-0256">Endoplasmic reticulum</keyword>
<keyword id="KW-0325">Glycoprotein</keyword>
<keyword id="KW-0472">Membrane</keyword>
<keyword id="KW-1185">Reference proteome</keyword>
<keyword id="KW-0812">Transmembrane</keyword>
<keyword id="KW-1133">Transmembrane helix</keyword>
<feature type="chain" id="PRO_0000316867" description="Phospholipid-transporting ATPase accessory subunit ivn1">
    <location>
        <begin position="1"/>
        <end position="371"/>
    </location>
</feature>
<feature type="topological domain" description="Cytoplasmic" evidence="5">
    <location>
        <begin position="1"/>
        <end position="39"/>
    </location>
</feature>
<feature type="transmembrane region" description="Helical" evidence="2">
    <location>
        <begin position="40"/>
        <end position="60"/>
    </location>
</feature>
<feature type="topological domain" description="Extracellular" evidence="5">
    <location>
        <begin position="61"/>
        <end position="325"/>
    </location>
</feature>
<feature type="transmembrane region" description="Helical" evidence="2">
    <location>
        <begin position="326"/>
        <end position="346"/>
    </location>
</feature>
<feature type="topological domain" description="Cytoplasmic" evidence="5">
    <location>
        <begin position="347"/>
        <end position="371"/>
    </location>
</feature>
<feature type="glycosylation site" description="N-linked (GlcNAc...) asparagine" evidence="2">
    <location>
        <position position="99"/>
    </location>
</feature>
<feature type="glycosylation site" description="N-linked (GlcNAc...) asparagine" evidence="2">
    <location>
        <position position="190"/>
    </location>
</feature>
<feature type="glycosylation site" description="N-linked (GlcNAc...) asparagine" evidence="2">
    <location>
        <position position="212"/>
    </location>
</feature>
<feature type="glycosylation site" description="N-linked (GlcNAc...) asparagine" evidence="2">
    <location>
        <position position="216"/>
    </location>
</feature>
<feature type="glycosylation site" description="N-linked (GlcNAc...) asparagine" evidence="2">
    <location>
        <position position="233"/>
    </location>
</feature>
<feature type="glycosylation site" description="N-linked (GlcNAc...) asparagine" evidence="2">
    <location>
        <position position="284"/>
    </location>
</feature>
<feature type="glycosylation site" description="N-linked (GlcNAc...) asparagine" evidence="2">
    <location>
        <position position="297"/>
    </location>
</feature>
<feature type="disulfide bond" evidence="1">
    <location>
        <begin position="75"/>
        <end position="111"/>
    </location>
</feature>
<feature type="disulfide bond" evidence="1">
    <location>
        <begin position="166"/>
        <end position="181"/>
    </location>
</feature>
<dbReference type="EMBL" id="AB004534">
    <property type="protein sequence ID" value="BAA21381.1"/>
    <property type="status" value="ALT_SEQ"/>
    <property type="molecule type" value="Genomic_DNA"/>
</dbReference>
<dbReference type="EMBL" id="CU329671">
    <property type="protein sequence ID" value="CAC37511.1"/>
    <property type="molecule type" value="Genomic_DNA"/>
</dbReference>
<dbReference type="RefSeq" id="NP_595627.1">
    <property type="nucleotide sequence ID" value="NM_001021521.2"/>
</dbReference>
<dbReference type="SMR" id="Q96WW4"/>
<dbReference type="BioGRID" id="276281">
    <property type="interactions" value="35"/>
</dbReference>
<dbReference type="FunCoup" id="Q96WW4">
    <property type="interactions" value="245"/>
</dbReference>
<dbReference type="STRING" id="284812.Q96WW4"/>
<dbReference type="GlyCosmos" id="Q96WW4">
    <property type="glycosylation" value="7 sites, No reported glycans"/>
</dbReference>
<dbReference type="iPTMnet" id="Q96WW4"/>
<dbReference type="PaxDb" id="4896-SPBC11B10.07c.1"/>
<dbReference type="EnsemblFungi" id="SPBC11B10.07c.1">
    <property type="protein sequence ID" value="SPBC11B10.07c.1:pep"/>
    <property type="gene ID" value="SPBC11B10.07c"/>
</dbReference>
<dbReference type="GeneID" id="2539729"/>
<dbReference type="KEGG" id="spo:2539729"/>
<dbReference type="PomBase" id="SPBC11B10.07c">
    <property type="gene designation" value="ivn1"/>
</dbReference>
<dbReference type="VEuPathDB" id="FungiDB:SPBC11B10.07c"/>
<dbReference type="eggNOG" id="KOG2952">
    <property type="taxonomic scope" value="Eukaryota"/>
</dbReference>
<dbReference type="HOGENOM" id="CLU_025025_0_1_1"/>
<dbReference type="InParanoid" id="Q96WW4"/>
<dbReference type="OMA" id="AWKPLYT"/>
<dbReference type="PhylomeDB" id="Q96WW4"/>
<dbReference type="PRO" id="PR:Q96WW4"/>
<dbReference type="Proteomes" id="UP000002485">
    <property type="component" value="Chromosome II"/>
</dbReference>
<dbReference type="GO" id="GO:0005783">
    <property type="term" value="C:endoplasmic reticulum"/>
    <property type="evidence" value="ECO:0007005"/>
    <property type="project" value="PomBase"/>
</dbReference>
<dbReference type="GO" id="GO:0005789">
    <property type="term" value="C:endoplasmic reticulum membrane"/>
    <property type="evidence" value="ECO:0007669"/>
    <property type="project" value="UniProtKB-SubCell"/>
</dbReference>
<dbReference type="GO" id="GO:0005794">
    <property type="term" value="C:Golgi apparatus"/>
    <property type="evidence" value="ECO:0000318"/>
    <property type="project" value="GO_Central"/>
</dbReference>
<dbReference type="GO" id="GO:1990531">
    <property type="term" value="C:phospholipid-translocating ATPase complex"/>
    <property type="evidence" value="ECO:0000266"/>
    <property type="project" value="PomBase"/>
</dbReference>
<dbReference type="GO" id="GO:0005886">
    <property type="term" value="C:plasma membrane"/>
    <property type="evidence" value="ECO:0000318"/>
    <property type="project" value="GO_Central"/>
</dbReference>
<dbReference type="GO" id="GO:0016887">
    <property type="term" value="F:ATP hydrolysis activity"/>
    <property type="evidence" value="ECO:0000305"/>
    <property type="project" value="PomBase"/>
</dbReference>
<dbReference type="GO" id="GO:0045332">
    <property type="term" value="P:phospholipid translocation"/>
    <property type="evidence" value="ECO:0000266"/>
    <property type="project" value="PomBase"/>
</dbReference>
<dbReference type="InterPro" id="IPR005045">
    <property type="entry name" value="CDC50/LEM3_fam"/>
</dbReference>
<dbReference type="PANTHER" id="PTHR10926">
    <property type="entry name" value="CELL CYCLE CONTROL PROTEIN 50"/>
    <property type="match status" value="1"/>
</dbReference>
<dbReference type="PANTHER" id="PTHR10926:SF69">
    <property type="entry name" value="PHOSPHOLIPID-TRANSPORTING ATPASE ACCESSORY SUBUNIT IVN1"/>
    <property type="match status" value="1"/>
</dbReference>
<dbReference type="Pfam" id="PF03381">
    <property type="entry name" value="CDC50"/>
    <property type="match status" value="1"/>
</dbReference>
<dbReference type="PIRSF" id="PIRSF015840">
    <property type="entry name" value="DUF284_TM_euk"/>
    <property type="match status" value="1"/>
</dbReference>
<gene>
    <name type="primary">ivn1</name>
    <name type="ORF">pi004</name>
    <name type="ORF">SPACTOKYO_453.33c</name>
    <name type="ORF">SPBC11B10.07c</name>
</gene>
<protein>
    <recommendedName>
        <fullName evidence="5">Phospholipid-transporting ATPase accessory subunit ivn1</fullName>
    </recommendedName>
    <alternativeName>
        <fullName>Invasion protein 1</fullName>
    </alternativeName>
</protein>
<evidence type="ECO:0000250" key="1">
    <source>
        <dbReference type="UniProtKB" id="P25656"/>
    </source>
</evidence>
<evidence type="ECO:0000255" key="2"/>
<evidence type="ECO:0000269" key="3">
    <source>
    </source>
</evidence>
<evidence type="ECO:0000269" key="4">
    <source>
    </source>
</evidence>
<evidence type="ECO:0000305" key="5"/>
<evidence type="ECO:0000312" key="6">
    <source>
        <dbReference type="EMBL" id="BAA21381.1"/>
    </source>
</evidence>
<evidence type="ECO:0000312" key="7">
    <source>
        <dbReference type="EMBL" id="CAC37511.1"/>
    </source>
</evidence>
<accession>Q96WW4</accession>
<accession>O13599</accession>
<sequence>MSQTEIVKKPKHKRFKRPDKSRFVQQTLPAWQFIFTPWTVLPLLFLLGIVFAPLGAGMFVASRRVKELRIDYTDCMNIGDEFKQVPSTNIEFQYKNVKNVTAMWKSSGDVCTLRFQIPEEMTSPVFAFYRLKNFYQNHRRYTVSADMFQLLGEARTVAQLKSYGFCKPLEANEEGKPYYPCGIIANSLFNDSYSSLLRYESFDSSNSLGLYNMTTNGTAWPEDRERYKKTKYNASQIVPPPNWAKMFPNGYTDDNIPDVSTWDAFQIWMRAAALPTFSKLALRNVTTALQPGIYEMNITYNFPVTEYKGTKTIMFSTTSVIGGKNYFLGILYFVIGGLCAASGVILSIACLIKPRRVGDPRYLSWNRGKSS</sequence>
<organism>
    <name type="scientific">Schizosaccharomyces pombe (strain 972 / ATCC 24843)</name>
    <name type="common">Fission yeast</name>
    <dbReference type="NCBI Taxonomy" id="284812"/>
    <lineage>
        <taxon>Eukaryota</taxon>
        <taxon>Fungi</taxon>
        <taxon>Dikarya</taxon>
        <taxon>Ascomycota</taxon>
        <taxon>Taphrinomycotina</taxon>
        <taxon>Schizosaccharomycetes</taxon>
        <taxon>Schizosaccharomycetales</taxon>
        <taxon>Schizosaccharomycetaceae</taxon>
        <taxon>Schizosaccharomyces</taxon>
    </lineage>
</organism>
<proteinExistence type="inferred from homology"/>
<name>IVN1_SCHPO</name>
<reference evidence="6" key="1">
    <citation type="journal article" date="2000" name="Yeast">
        <title>A 38 kb segment containing the cdc2 gene from the left arm of fission yeast chromosome II: sequence analysis and characterization of the genomic DNA and cDNAs encoded on the segment.</title>
        <authorList>
            <person name="Machida M."/>
            <person name="Yamazaki S."/>
            <person name="Kunihiro S."/>
            <person name="Tanaka T."/>
            <person name="Kushida N."/>
            <person name="Jinno K."/>
            <person name="Haikawa Y."/>
            <person name="Yamazaki J."/>
            <person name="Yamamoto S."/>
            <person name="Sekine M."/>
            <person name="Oguchi A."/>
            <person name="Nagai Y."/>
            <person name="Sakai M."/>
            <person name="Aoki K."/>
            <person name="Ogura K."/>
            <person name="Kudoh Y."/>
            <person name="Kikuchi H."/>
            <person name="Zhang M.Q."/>
            <person name="Yanagida M."/>
        </authorList>
    </citation>
    <scope>NUCLEOTIDE SEQUENCE [LARGE SCALE GENOMIC DNA]</scope>
    <source>
        <strain>972 / ATCC 24843</strain>
    </source>
</reference>
<reference evidence="7" key="2">
    <citation type="journal article" date="2002" name="Nature">
        <title>The genome sequence of Schizosaccharomyces pombe.</title>
        <authorList>
            <person name="Wood V."/>
            <person name="Gwilliam R."/>
            <person name="Rajandream M.A."/>
            <person name="Lyne M.H."/>
            <person name="Lyne R."/>
            <person name="Stewart A."/>
            <person name="Sgouros J.G."/>
            <person name="Peat N."/>
            <person name="Hayles J."/>
            <person name="Baker S.G."/>
            <person name="Basham D."/>
            <person name="Bowman S."/>
            <person name="Brooks K."/>
            <person name="Brown D."/>
            <person name="Brown S."/>
            <person name="Chillingworth T."/>
            <person name="Churcher C.M."/>
            <person name="Collins M."/>
            <person name="Connor R."/>
            <person name="Cronin A."/>
            <person name="Davis P."/>
            <person name="Feltwell T."/>
            <person name="Fraser A."/>
            <person name="Gentles S."/>
            <person name="Goble A."/>
            <person name="Hamlin N."/>
            <person name="Harris D.E."/>
            <person name="Hidalgo J."/>
            <person name="Hodgson G."/>
            <person name="Holroyd S."/>
            <person name="Hornsby T."/>
            <person name="Howarth S."/>
            <person name="Huckle E.J."/>
            <person name="Hunt S."/>
            <person name="Jagels K."/>
            <person name="James K.D."/>
            <person name="Jones L."/>
            <person name="Jones M."/>
            <person name="Leather S."/>
            <person name="McDonald S."/>
            <person name="McLean J."/>
            <person name="Mooney P."/>
            <person name="Moule S."/>
            <person name="Mungall K.L."/>
            <person name="Murphy L.D."/>
            <person name="Niblett D."/>
            <person name="Odell C."/>
            <person name="Oliver K."/>
            <person name="O'Neil S."/>
            <person name="Pearson D."/>
            <person name="Quail M.A."/>
            <person name="Rabbinowitsch E."/>
            <person name="Rutherford K.M."/>
            <person name="Rutter S."/>
            <person name="Saunders D."/>
            <person name="Seeger K."/>
            <person name="Sharp S."/>
            <person name="Skelton J."/>
            <person name="Simmonds M.N."/>
            <person name="Squares R."/>
            <person name="Squares S."/>
            <person name="Stevens K."/>
            <person name="Taylor K."/>
            <person name="Taylor R.G."/>
            <person name="Tivey A."/>
            <person name="Walsh S.V."/>
            <person name="Warren T."/>
            <person name="Whitehead S."/>
            <person name="Woodward J.R."/>
            <person name="Volckaert G."/>
            <person name="Aert R."/>
            <person name="Robben J."/>
            <person name="Grymonprez B."/>
            <person name="Weltjens I."/>
            <person name="Vanstreels E."/>
            <person name="Rieger M."/>
            <person name="Schaefer M."/>
            <person name="Mueller-Auer S."/>
            <person name="Gabel C."/>
            <person name="Fuchs M."/>
            <person name="Duesterhoeft A."/>
            <person name="Fritzc C."/>
            <person name="Holzer E."/>
            <person name="Moestl D."/>
            <person name="Hilbert H."/>
            <person name="Borzym K."/>
            <person name="Langer I."/>
            <person name="Beck A."/>
            <person name="Lehrach H."/>
            <person name="Reinhardt R."/>
            <person name="Pohl T.M."/>
            <person name="Eger P."/>
            <person name="Zimmermann W."/>
            <person name="Wedler H."/>
            <person name="Wambutt R."/>
            <person name="Purnelle B."/>
            <person name="Goffeau A."/>
            <person name="Cadieu E."/>
            <person name="Dreano S."/>
            <person name="Gloux S."/>
            <person name="Lelaure V."/>
            <person name="Mottier S."/>
            <person name="Galibert F."/>
            <person name="Aves S.J."/>
            <person name="Xiang Z."/>
            <person name="Hunt C."/>
            <person name="Moore K."/>
            <person name="Hurst S.M."/>
            <person name="Lucas M."/>
            <person name="Rochet M."/>
            <person name="Gaillardin C."/>
            <person name="Tallada V.A."/>
            <person name="Garzon A."/>
            <person name="Thode G."/>
            <person name="Daga R.R."/>
            <person name="Cruzado L."/>
            <person name="Jimenez J."/>
            <person name="Sanchez M."/>
            <person name="del Rey F."/>
            <person name="Benito J."/>
            <person name="Dominguez A."/>
            <person name="Revuelta J.L."/>
            <person name="Moreno S."/>
            <person name="Armstrong J."/>
            <person name="Forsburg S.L."/>
            <person name="Cerutti L."/>
            <person name="Lowe T."/>
            <person name="McCombie W.R."/>
            <person name="Paulsen I."/>
            <person name="Potashkin J."/>
            <person name="Shpakovski G.V."/>
            <person name="Ussery D."/>
            <person name="Barrell B.G."/>
            <person name="Nurse P."/>
        </authorList>
    </citation>
    <scope>NUCLEOTIDE SEQUENCE [LARGE SCALE GENOMIC DNA]</scope>
    <source>
        <strain>972 / ATCC 24843</strain>
    </source>
</reference>
<reference evidence="5" key="3">
    <citation type="journal article" date="2006" name="Nat. Biotechnol.">
        <title>ORFeome cloning and global analysis of protein localization in the fission yeast Schizosaccharomyces pombe.</title>
        <authorList>
            <person name="Matsuyama A."/>
            <person name="Arai R."/>
            <person name="Yashiroda Y."/>
            <person name="Shirai A."/>
            <person name="Kamata A."/>
            <person name="Sekido S."/>
            <person name="Kobayashi Y."/>
            <person name="Hashimoto A."/>
            <person name="Hamamoto M."/>
            <person name="Hiraoka Y."/>
            <person name="Horinouchi S."/>
            <person name="Yoshida M."/>
        </authorList>
    </citation>
    <scope>SUBCELLULAR LOCATION [LARGE SCALE ANALYSIS]</scope>
</reference>
<reference key="4">
    <citation type="journal article" date="2009" name="Eukaryot. Cell">
        <title>Functional genomics of adhesion, invasion, and mycelial formation in Schizosaccharomyces pombe.</title>
        <authorList>
            <person name="Dodgson J."/>
            <person name="Avula H."/>
            <person name="Hoe K.L."/>
            <person name="Kim D.U."/>
            <person name="Park H.O."/>
            <person name="Hayles J."/>
            <person name="Armstrong J."/>
        </authorList>
    </citation>
    <scope>DISRUPTION PHENOTYPE</scope>
</reference>